<gene>
    <name evidence="1" type="primary">coaD</name>
    <name type="ordered locus">VV0292</name>
</gene>
<feature type="chain" id="PRO_0000156307" description="Phosphopantetheine adenylyltransferase">
    <location>
        <begin position="1"/>
        <end position="164"/>
    </location>
</feature>
<feature type="binding site" evidence="1">
    <location>
        <begin position="14"/>
        <end position="15"/>
    </location>
    <ligand>
        <name>ATP</name>
        <dbReference type="ChEBI" id="CHEBI:30616"/>
    </ligand>
</feature>
<feature type="binding site" evidence="1">
    <location>
        <position position="14"/>
    </location>
    <ligand>
        <name>substrate</name>
    </ligand>
</feature>
<feature type="binding site" evidence="1">
    <location>
        <position position="22"/>
    </location>
    <ligand>
        <name>ATP</name>
        <dbReference type="ChEBI" id="CHEBI:30616"/>
    </ligand>
</feature>
<feature type="binding site" evidence="1">
    <location>
        <position position="46"/>
    </location>
    <ligand>
        <name>substrate</name>
    </ligand>
</feature>
<feature type="binding site" evidence="1">
    <location>
        <position position="78"/>
    </location>
    <ligand>
        <name>substrate</name>
    </ligand>
</feature>
<feature type="binding site" evidence="1">
    <location>
        <position position="92"/>
    </location>
    <ligand>
        <name>substrate</name>
    </ligand>
</feature>
<feature type="binding site" evidence="1">
    <location>
        <begin position="93"/>
        <end position="95"/>
    </location>
    <ligand>
        <name>ATP</name>
        <dbReference type="ChEBI" id="CHEBI:30616"/>
    </ligand>
</feature>
<feature type="binding site" evidence="1">
    <location>
        <position position="103"/>
    </location>
    <ligand>
        <name>ATP</name>
        <dbReference type="ChEBI" id="CHEBI:30616"/>
    </ligand>
</feature>
<feature type="binding site" evidence="1">
    <location>
        <begin position="128"/>
        <end position="134"/>
    </location>
    <ligand>
        <name>ATP</name>
        <dbReference type="ChEBI" id="CHEBI:30616"/>
    </ligand>
</feature>
<feature type="site" description="Transition state stabilizer" evidence="1">
    <location>
        <position position="22"/>
    </location>
</feature>
<evidence type="ECO:0000255" key="1">
    <source>
        <dbReference type="HAMAP-Rule" id="MF_00151"/>
    </source>
</evidence>
<sequence length="164" mass="18256">MSKKALSRVVYPGTFDPITNGHLDLIERAAKMFDEVIIAVAASPSKNTMFTLEERVDFARQVTRHLDNVTAQGFSGLMVDFARAVDANVLIRGLRTTVDFEYEFGLTNMYRRLLPGLESVFLTPSEEHAFISSTIVREVAIHGGDVTQFVPTVVAEALHQKKKV</sequence>
<reference key="1">
    <citation type="journal article" date="2003" name="Genome Res.">
        <title>Comparative genome analysis of Vibrio vulnificus, a marine pathogen.</title>
        <authorList>
            <person name="Chen C.-Y."/>
            <person name="Wu K.-M."/>
            <person name="Chang Y.-C."/>
            <person name="Chang C.-H."/>
            <person name="Tsai H.-C."/>
            <person name="Liao T.-L."/>
            <person name="Liu Y.-M."/>
            <person name="Chen H.-J."/>
            <person name="Shen A.B.-T."/>
            <person name="Li J.-C."/>
            <person name="Su T.-L."/>
            <person name="Shao C.-P."/>
            <person name="Lee C.-T."/>
            <person name="Hor L.-I."/>
            <person name="Tsai S.-F."/>
        </authorList>
    </citation>
    <scope>NUCLEOTIDE SEQUENCE [LARGE SCALE GENOMIC DNA]</scope>
    <source>
        <strain>YJ016</strain>
    </source>
</reference>
<organism>
    <name type="scientific">Vibrio vulnificus (strain YJ016)</name>
    <dbReference type="NCBI Taxonomy" id="196600"/>
    <lineage>
        <taxon>Bacteria</taxon>
        <taxon>Pseudomonadati</taxon>
        <taxon>Pseudomonadota</taxon>
        <taxon>Gammaproteobacteria</taxon>
        <taxon>Vibrionales</taxon>
        <taxon>Vibrionaceae</taxon>
        <taxon>Vibrio</taxon>
    </lineage>
</organism>
<dbReference type="EC" id="2.7.7.3" evidence="1"/>
<dbReference type="EMBL" id="BA000037">
    <property type="protein sequence ID" value="BAC93056.1"/>
    <property type="molecule type" value="Genomic_DNA"/>
</dbReference>
<dbReference type="RefSeq" id="WP_011078889.1">
    <property type="nucleotide sequence ID" value="NC_005139.1"/>
</dbReference>
<dbReference type="SMR" id="Q7MPS0"/>
<dbReference type="STRING" id="672.VV93_v1c02830"/>
<dbReference type="KEGG" id="vvy:VV0292"/>
<dbReference type="eggNOG" id="COG0669">
    <property type="taxonomic scope" value="Bacteria"/>
</dbReference>
<dbReference type="HOGENOM" id="CLU_100149_0_1_6"/>
<dbReference type="UniPathway" id="UPA00241">
    <property type="reaction ID" value="UER00355"/>
</dbReference>
<dbReference type="Proteomes" id="UP000002675">
    <property type="component" value="Chromosome I"/>
</dbReference>
<dbReference type="GO" id="GO:0005737">
    <property type="term" value="C:cytoplasm"/>
    <property type="evidence" value="ECO:0007669"/>
    <property type="project" value="UniProtKB-SubCell"/>
</dbReference>
<dbReference type="GO" id="GO:0005524">
    <property type="term" value="F:ATP binding"/>
    <property type="evidence" value="ECO:0007669"/>
    <property type="project" value="UniProtKB-KW"/>
</dbReference>
<dbReference type="GO" id="GO:0004595">
    <property type="term" value="F:pantetheine-phosphate adenylyltransferase activity"/>
    <property type="evidence" value="ECO:0007669"/>
    <property type="project" value="UniProtKB-UniRule"/>
</dbReference>
<dbReference type="GO" id="GO:0015937">
    <property type="term" value="P:coenzyme A biosynthetic process"/>
    <property type="evidence" value="ECO:0007669"/>
    <property type="project" value="UniProtKB-UniRule"/>
</dbReference>
<dbReference type="CDD" id="cd02163">
    <property type="entry name" value="PPAT"/>
    <property type="match status" value="1"/>
</dbReference>
<dbReference type="FunFam" id="3.40.50.620:FF:000012">
    <property type="entry name" value="Phosphopantetheine adenylyltransferase"/>
    <property type="match status" value="1"/>
</dbReference>
<dbReference type="Gene3D" id="3.40.50.620">
    <property type="entry name" value="HUPs"/>
    <property type="match status" value="1"/>
</dbReference>
<dbReference type="HAMAP" id="MF_00151">
    <property type="entry name" value="PPAT_bact"/>
    <property type="match status" value="1"/>
</dbReference>
<dbReference type="InterPro" id="IPR004821">
    <property type="entry name" value="Cyt_trans-like"/>
</dbReference>
<dbReference type="InterPro" id="IPR001980">
    <property type="entry name" value="PPAT"/>
</dbReference>
<dbReference type="InterPro" id="IPR014729">
    <property type="entry name" value="Rossmann-like_a/b/a_fold"/>
</dbReference>
<dbReference type="NCBIfam" id="TIGR01510">
    <property type="entry name" value="coaD_prev_kdtB"/>
    <property type="match status" value="1"/>
</dbReference>
<dbReference type="NCBIfam" id="TIGR00125">
    <property type="entry name" value="cyt_tran_rel"/>
    <property type="match status" value="1"/>
</dbReference>
<dbReference type="PANTHER" id="PTHR21342">
    <property type="entry name" value="PHOSPHOPANTETHEINE ADENYLYLTRANSFERASE"/>
    <property type="match status" value="1"/>
</dbReference>
<dbReference type="PANTHER" id="PTHR21342:SF1">
    <property type="entry name" value="PHOSPHOPANTETHEINE ADENYLYLTRANSFERASE"/>
    <property type="match status" value="1"/>
</dbReference>
<dbReference type="Pfam" id="PF01467">
    <property type="entry name" value="CTP_transf_like"/>
    <property type="match status" value="1"/>
</dbReference>
<dbReference type="PRINTS" id="PR01020">
    <property type="entry name" value="LPSBIOSNTHSS"/>
</dbReference>
<dbReference type="SUPFAM" id="SSF52374">
    <property type="entry name" value="Nucleotidylyl transferase"/>
    <property type="match status" value="1"/>
</dbReference>
<comment type="function">
    <text evidence="1">Reversibly transfers an adenylyl group from ATP to 4'-phosphopantetheine, yielding dephospho-CoA (dPCoA) and pyrophosphate.</text>
</comment>
<comment type="catalytic activity">
    <reaction evidence="1">
        <text>(R)-4'-phosphopantetheine + ATP + H(+) = 3'-dephospho-CoA + diphosphate</text>
        <dbReference type="Rhea" id="RHEA:19801"/>
        <dbReference type="ChEBI" id="CHEBI:15378"/>
        <dbReference type="ChEBI" id="CHEBI:30616"/>
        <dbReference type="ChEBI" id="CHEBI:33019"/>
        <dbReference type="ChEBI" id="CHEBI:57328"/>
        <dbReference type="ChEBI" id="CHEBI:61723"/>
        <dbReference type="EC" id="2.7.7.3"/>
    </reaction>
</comment>
<comment type="cofactor">
    <cofactor evidence="1">
        <name>Mg(2+)</name>
        <dbReference type="ChEBI" id="CHEBI:18420"/>
    </cofactor>
</comment>
<comment type="pathway">
    <text evidence="1">Cofactor biosynthesis; coenzyme A biosynthesis; CoA from (R)-pantothenate: step 4/5.</text>
</comment>
<comment type="subunit">
    <text evidence="1">Homohexamer.</text>
</comment>
<comment type="subcellular location">
    <subcellularLocation>
        <location evidence="1">Cytoplasm</location>
    </subcellularLocation>
</comment>
<comment type="similarity">
    <text evidence="1">Belongs to the bacterial CoaD family.</text>
</comment>
<keyword id="KW-0067">ATP-binding</keyword>
<keyword id="KW-0173">Coenzyme A biosynthesis</keyword>
<keyword id="KW-0963">Cytoplasm</keyword>
<keyword id="KW-0460">Magnesium</keyword>
<keyword id="KW-0547">Nucleotide-binding</keyword>
<keyword id="KW-0548">Nucleotidyltransferase</keyword>
<keyword id="KW-0808">Transferase</keyword>
<protein>
    <recommendedName>
        <fullName evidence="1">Phosphopantetheine adenylyltransferase</fullName>
        <ecNumber evidence="1">2.7.7.3</ecNumber>
    </recommendedName>
    <alternativeName>
        <fullName evidence="1">Dephospho-CoA pyrophosphorylase</fullName>
    </alternativeName>
    <alternativeName>
        <fullName evidence="1">Pantetheine-phosphate adenylyltransferase</fullName>
        <shortName evidence="1">PPAT</shortName>
    </alternativeName>
</protein>
<accession>Q7MPS0</accession>
<proteinExistence type="inferred from homology"/>
<name>COAD_VIBVY</name>